<gene>
    <name evidence="1" type="primary">cysD</name>
    <name type="ordered locus">SEN2774</name>
</gene>
<sequence>MDQKRLTHLRQLEAESIHIIREVAAEFANPVMLYSIGKDSSVMLHLARKAFYPGTLPFPLLHVDTGWKFREMYAFRDRTANAYGCELLVHKNPEGVAMGINPFVHGSAKHTDIMKTEGLKQALNKYGFDAAFGGARRDEEKSRAKERIYSFRDRFHRWDPKNQRPELWRNYNGQINKGESIRVFPLSNWTEQDIWQYIWLENIDIVPLYLAAERPVLERDGMLMMVDDDRIDLQPGEVIKKRMVRFRTLGCWPLTGAVESHAQTLPEIIEEMLVSTTSERQGRMIDRDQAGSMELKKRQGYF</sequence>
<name>CYSD_SALEP</name>
<comment type="function">
    <text evidence="1">With CysN forms the ATP sulfurylase (ATPS) that catalyzes the adenylation of sulfate producing adenosine 5'-phosphosulfate (APS) and diphosphate, the first enzymatic step in sulfur assimilation pathway. APS synthesis involves the formation of a high-energy phosphoric-sulfuric acid anhydride bond driven by GTP hydrolysis by CysN coupled to ATP hydrolysis by CysD.</text>
</comment>
<comment type="catalytic activity">
    <reaction evidence="1">
        <text>sulfate + ATP + H(+) = adenosine 5'-phosphosulfate + diphosphate</text>
        <dbReference type="Rhea" id="RHEA:18133"/>
        <dbReference type="ChEBI" id="CHEBI:15378"/>
        <dbReference type="ChEBI" id="CHEBI:16189"/>
        <dbReference type="ChEBI" id="CHEBI:30616"/>
        <dbReference type="ChEBI" id="CHEBI:33019"/>
        <dbReference type="ChEBI" id="CHEBI:58243"/>
        <dbReference type="EC" id="2.7.7.4"/>
    </reaction>
</comment>
<comment type="pathway">
    <text evidence="1">Sulfur metabolism; hydrogen sulfide biosynthesis; sulfite from sulfate: step 1/3.</text>
</comment>
<comment type="subunit">
    <text evidence="1">Heterodimer composed of CysD, the smaller subunit, and CysN.</text>
</comment>
<comment type="similarity">
    <text evidence="1">Belongs to the PAPS reductase family. CysD subfamily.</text>
</comment>
<feature type="chain" id="PRO_1000092220" description="Sulfate adenylyltransferase subunit 2">
    <location>
        <begin position="1"/>
        <end position="302"/>
    </location>
</feature>
<proteinExistence type="inferred from homology"/>
<dbReference type="EC" id="2.7.7.4" evidence="1"/>
<dbReference type="EMBL" id="AM933172">
    <property type="protein sequence ID" value="CAR34353.1"/>
    <property type="molecule type" value="Genomic_DNA"/>
</dbReference>
<dbReference type="RefSeq" id="WP_000372384.1">
    <property type="nucleotide sequence ID" value="NC_011294.1"/>
</dbReference>
<dbReference type="SMR" id="B5QW23"/>
<dbReference type="KEGG" id="set:SEN2774"/>
<dbReference type="HOGENOM" id="CLU_043026_0_0_6"/>
<dbReference type="UniPathway" id="UPA00140">
    <property type="reaction ID" value="UER00204"/>
</dbReference>
<dbReference type="Proteomes" id="UP000000613">
    <property type="component" value="Chromosome"/>
</dbReference>
<dbReference type="GO" id="GO:0005524">
    <property type="term" value="F:ATP binding"/>
    <property type="evidence" value="ECO:0007669"/>
    <property type="project" value="UniProtKB-KW"/>
</dbReference>
<dbReference type="GO" id="GO:0004781">
    <property type="term" value="F:sulfate adenylyltransferase (ATP) activity"/>
    <property type="evidence" value="ECO:0007669"/>
    <property type="project" value="UniProtKB-UniRule"/>
</dbReference>
<dbReference type="GO" id="GO:0070814">
    <property type="term" value="P:hydrogen sulfide biosynthetic process"/>
    <property type="evidence" value="ECO:0007669"/>
    <property type="project" value="UniProtKB-UniRule"/>
</dbReference>
<dbReference type="GO" id="GO:0000103">
    <property type="term" value="P:sulfate assimilation"/>
    <property type="evidence" value="ECO:0007669"/>
    <property type="project" value="UniProtKB-UniRule"/>
</dbReference>
<dbReference type="CDD" id="cd23946">
    <property type="entry name" value="Sulfate_adenylyltransferase_2"/>
    <property type="match status" value="1"/>
</dbReference>
<dbReference type="FunFam" id="3.40.50.620:FF:000002">
    <property type="entry name" value="Sulfate adenylyltransferase subunit 2"/>
    <property type="match status" value="1"/>
</dbReference>
<dbReference type="Gene3D" id="3.40.50.620">
    <property type="entry name" value="HUPs"/>
    <property type="match status" value="1"/>
</dbReference>
<dbReference type="HAMAP" id="MF_00064">
    <property type="entry name" value="Sulf_adenylyltr_sub2"/>
    <property type="match status" value="1"/>
</dbReference>
<dbReference type="InterPro" id="IPR002500">
    <property type="entry name" value="PAPS_reduct_dom"/>
</dbReference>
<dbReference type="InterPro" id="IPR014729">
    <property type="entry name" value="Rossmann-like_a/b/a_fold"/>
</dbReference>
<dbReference type="InterPro" id="IPR011784">
    <property type="entry name" value="SO4_adenylTrfase_ssu"/>
</dbReference>
<dbReference type="InterPro" id="IPR050128">
    <property type="entry name" value="Sulfate_adenylyltrnsfr_sub2"/>
</dbReference>
<dbReference type="NCBIfam" id="TIGR02039">
    <property type="entry name" value="CysD"/>
    <property type="match status" value="1"/>
</dbReference>
<dbReference type="NCBIfam" id="NF003587">
    <property type="entry name" value="PRK05253.1"/>
    <property type="match status" value="1"/>
</dbReference>
<dbReference type="NCBIfam" id="NF009214">
    <property type="entry name" value="PRK12563.1"/>
    <property type="match status" value="1"/>
</dbReference>
<dbReference type="PANTHER" id="PTHR43196">
    <property type="entry name" value="SULFATE ADENYLYLTRANSFERASE SUBUNIT 2"/>
    <property type="match status" value="1"/>
</dbReference>
<dbReference type="PANTHER" id="PTHR43196:SF1">
    <property type="entry name" value="SULFATE ADENYLYLTRANSFERASE SUBUNIT 2"/>
    <property type="match status" value="1"/>
</dbReference>
<dbReference type="Pfam" id="PF01507">
    <property type="entry name" value="PAPS_reduct"/>
    <property type="match status" value="1"/>
</dbReference>
<dbReference type="PIRSF" id="PIRSF002936">
    <property type="entry name" value="CysDAde_trans"/>
    <property type="match status" value="1"/>
</dbReference>
<dbReference type="SUPFAM" id="SSF52402">
    <property type="entry name" value="Adenine nucleotide alpha hydrolases-like"/>
    <property type="match status" value="1"/>
</dbReference>
<reference key="1">
    <citation type="journal article" date="2008" name="Genome Res.">
        <title>Comparative genome analysis of Salmonella enteritidis PT4 and Salmonella gallinarum 287/91 provides insights into evolutionary and host adaptation pathways.</title>
        <authorList>
            <person name="Thomson N.R."/>
            <person name="Clayton D.J."/>
            <person name="Windhorst D."/>
            <person name="Vernikos G."/>
            <person name="Davidson S."/>
            <person name="Churcher C."/>
            <person name="Quail M.A."/>
            <person name="Stevens M."/>
            <person name="Jones M.A."/>
            <person name="Watson M."/>
            <person name="Barron A."/>
            <person name="Layton A."/>
            <person name="Pickard D."/>
            <person name="Kingsley R.A."/>
            <person name="Bignell A."/>
            <person name="Clark L."/>
            <person name="Harris B."/>
            <person name="Ormond D."/>
            <person name="Abdellah Z."/>
            <person name="Brooks K."/>
            <person name="Cherevach I."/>
            <person name="Chillingworth T."/>
            <person name="Woodward J."/>
            <person name="Norberczak H."/>
            <person name="Lord A."/>
            <person name="Arrowsmith C."/>
            <person name="Jagels K."/>
            <person name="Moule S."/>
            <person name="Mungall K."/>
            <person name="Saunders M."/>
            <person name="Whitehead S."/>
            <person name="Chabalgoity J.A."/>
            <person name="Maskell D."/>
            <person name="Humphreys T."/>
            <person name="Roberts M."/>
            <person name="Barrow P.A."/>
            <person name="Dougan G."/>
            <person name="Parkhill J."/>
        </authorList>
    </citation>
    <scope>NUCLEOTIDE SEQUENCE [LARGE SCALE GENOMIC DNA]</scope>
    <source>
        <strain>P125109</strain>
    </source>
</reference>
<keyword id="KW-0067">ATP-binding</keyword>
<keyword id="KW-0547">Nucleotide-binding</keyword>
<keyword id="KW-0548">Nucleotidyltransferase</keyword>
<keyword id="KW-0808">Transferase</keyword>
<protein>
    <recommendedName>
        <fullName evidence="1">Sulfate adenylyltransferase subunit 2</fullName>
        <ecNumber evidence="1">2.7.7.4</ecNumber>
    </recommendedName>
    <alternativeName>
        <fullName evidence="1">ATP-sulfurylase small subunit</fullName>
    </alternativeName>
    <alternativeName>
        <fullName evidence="1">Sulfate adenylate transferase</fullName>
        <shortName evidence="1">SAT</shortName>
    </alternativeName>
</protein>
<accession>B5QW23</accession>
<evidence type="ECO:0000255" key="1">
    <source>
        <dbReference type="HAMAP-Rule" id="MF_00064"/>
    </source>
</evidence>
<organism>
    <name type="scientific">Salmonella enteritidis PT4 (strain P125109)</name>
    <dbReference type="NCBI Taxonomy" id="550537"/>
    <lineage>
        <taxon>Bacteria</taxon>
        <taxon>Pseudomonadati</taxon>
        <taxon>Pseudomonadota</taxon>
        <taxon>Gammaproteobacteria</taxon>
        <taxon>Enterobacterales</taxon>
        <taxon>Enterobacteriaceae</taxon>
        <taxon>Salmonella</taxon>
    </lineage>
</organism>